<organism>
    <name type="scientific">Hydrangea macrophylla</name>
    <name type="common">Bigleaf hydrangea</name>
    <name type="synonym">Viburnum macrophyllum</name>
    <dbReference type="NCBI Taxonomy" id="23110"/>
    <lineage>
        <taxon>Eukaryota</taxon>
        <taxon>Viridiplantae</taxon>
        <taxon>Streptophyta</taxon>
        <taxon>Embryophyta</taxon>
        <taxon>Tracheophyta</taxon>
        <taxon>Spermatophyta</taxon>
        <taxon>Magnoliopsida</taxon>
        <taxon>eudicotyledons</taxon>
        <taxon>Gunneridae</taxon>
        <taxon>Pentapetalae</taxon>
        <taxon>asterids</taxon>
        <taxon>Cornales</taxon>
        <taxon>Hydrangeaceae</taxon>
        <taxon>Hydrangeeae</taxon>
        <taxon>Hydrangea</taxon>
        <taxon>Hydrangea sect. Macrophyllae</taxon>
    </lineage>
</organism>
<reference key="1">
    <citation type="submission" date="2000-02" db="EMBL/GenBank/DDBJ databases">
        <title>Phylogenetic relationships of the aquatic angiosperm family Podostemaceae inferred from matK sequence data.</title>
        <authorList>
            <person name="Kita Y."/>
            <person name="Kato M."/>
        </authorList>
    </citation>
    <scope>NUCLEOTIDE SEQUENCE [GENOMIC DNA]</scope>
</reference>
<geneLocation type="chloroplast"/>
<dbReference type="EMBL" id="AB038178">
    <property type="protein sequence ID" value="BAB83139.1"/>
    <property type="molecule type" value="Genomic_DNA"/>
</dbReference>
<dbReference type="GO" id="GO:0009507">
    <property type="term" value="C:chloroplast"/>
    <property type="evidence" value="ECO:0007669"/>
    <property type="project" value="UniProtKB-SubCell"/>
</dbReference>
<dbReference type="GO" id="GO:0003723">
    <property type="term" value="F:RNA binding"/>
    <property type="evidence" value="ECO:0007669"/>
    <property type="project" value="UniProtKB-KW"/>
</dbReference>
<dbReference type="GO" id="GO:0006397">
    <property type="term" value="P:mRNA processing"/>
    <property type="evidence" value="ECO:0007669"/>
    <property type="project" value="UniProtKB-KW"/>
</dbReference>
<dbReference type="GO" id="GO:0008380">
    <property type="term" value="P:RNA splicing"/>
    <property type="evidence" value="ECO:0007669"/>
    <property type="project" value="UniProtKB-UniRule"/>
</dbReference>
<dbReference type="GO" id="GO:0008033">
    <property type="term" value="P:tRNA processing"/>
    <property type="evidence" value="ECO:0007669"/>
    <property type="project" value="UniProtKB-KW"/>
</dbReference>
<dbReference type="HAMAP" id="MF_01390">
    <property type="entry name" value="MatK"/>
    <property type="match status" value="1"/>
</dbReference>
<dbReference type="InterPro" id="IPR024937">
    <property type="entry name" value="Domain_X"/>
</dbReference>
<dbReference type="InterPro" id="IPR002866">
    <property type="entry name" value="Maturase_MatK"/>
</dbReference>
<dbReference type="InterPro" id="IPR024942">
    <property type="entry name" value="Maturase_MatK_N"/>
</dbReference>
<dbReference type="PANTHER" id="PTHR34811">
    <property type="entry name" value="MATURASE K"/>
    <property type="match status" value="1"/>
</dbReference>
<dbReference type="PANTHER" id="PTHR34811:SF1">
    <property type="entry name" value="MATURASE K"/>
    <property type="match status" value="1"/>
</dbReference>
<dbReference type="Pfam" id="PF01348">
    <property type="entry name" value="Intron_maturas2"/>
    <property type="match status" value="1"/>
</dbReference>
<dbReference type="Pfam" id="PF01824">
    <property type="entry name" value="MatK_N"/>
    <property type="match status" value="1"/>
</dbReference>
<evidence type="ECO:0000255" key="1">
    <source>
        <dbReference type="HAMAP-Rule" id="MF_01390"/>
    </source>
</evidence>
<protein>
    <recommendedName>
        <fullName evidence="1">Maturase K</fullName>
    </recommendedName>
    <alternativeName>
        <fullName evidence="1">Intron maturase</fullName>
    </alternativeName>
</protein>
<gene>
    <name evidence="1" type="primary">matK</name>
</gene>
<feature type="chain" id="PRO_0000143429" description="Maturase K">
    <location>
        <begin position="1"/>
        <end position="506"/>
    </location>
</feature>
<accession>Q8WKM6</accession>
<comment type="function">
    <text evidence="1">Usually encoded in the trnK tRNA gene intron. Probably assists in splicing its own and other chloroplast group II introns.</text>
</comment>
<comment type="subcellular location">
    <subcellularLocation>
        <location>Plastid</location>
        <location>Chloroplast</location>
    </subcellularLocation>
</comment>
<comment type="similarity">
    <text evidence="1">Belongs to the intron maturase 2 family. MatK subfamily.</text>
</comment>
<proteinExistence type="inferred from homology"/>
<keyword id="KW-0150">Chloroplast</keyword>
<keyword id="KW-0507">mRNA processing</keyword>
<keyword id="KW-0934">Plastid</keyword>
<keyword id="KW-0694">RNA-binding</keyword>
<keyword id="KW-0819">tRNA processing</keyword>
<sequence>MEEFKRYFELDRYHQHDFLYPLIFQEYIYALAHDHGLNRSILLENAGYDNKSSLLIVKRLITRMYEQNHFLISVNDSNQNQFLGHNKNLSYQMISEGFSVIVEIPFSLRLISSLEGKEIVKSHNLRSIHSIFPFLEEKFLHLNYVLDILIPYPIHLEILVQTLRHWVKDASSLHLLRFFLHEYRNWNSLITPKKTSFFFSKRNERLFLFLYNSHVCEYESIFVFLRNQSSHLRSTSSGALLERIYFYGKIEHHVEVFAKDFQAMLWLFKDPFIHYVRYQGKSILASKGTSLLMNKWKYYLVNCWQCHFYVWSQPRSIYINQLSNHSLHFLGYLSSVRLNPSMVRSQMLENSYLIDNAIKKFDTIVPIIPLIGSLAKAKFCNVLGHPISKPVWADLSDSDIIDRFGRICRNLSHYHSGSSKKKSLYRIKYILRLSCARTLARKHKSTVRAFLKRVGSELLEEFFTEEEPVLSLTFPRASSTSRGLWLYRRRIWYLDIICINDLANPE</sequence>
<name>MATK_HYDMC</name>